<accession>Q8VXX9</accession>
<accession>O23316</accession>
<proteinExistence type="evidence at transcript level"/>
<reference key="1">
    <citation type="journal article" date="1998" name="Nature">
        <title>Analysis of 1.9 Mb of contiguous sequence from chromosome 4 of Arabidopsis thaliana.</title>
        <authorList>
            <person name="Bevan M."/>
            <person name="Bancroft I."/>
            <person name="Bent E."/>
            <person name="Love K."/>
            <person name="Goodman H.M."/>
            <person name="Dean C."/>
            <person name="Bergkamp R."/>
            <person name="Dirkse W."/>
            <person name="van Staveren M."/>
            <person name="Stiekema W."/>
            <person name="Drost L."/>
            <person name="Ridley P."/>
            <person name="Hudson S.-A."/>
            <person name="Patel K."/>
            <person name="Murphy G."/>
            <person name="Piffanelli P."/>
            <person name="Wedler H."/>
            <person name="Wedler E."/>
            <person name="Wambutt R."/>
            <person name="Weitzenegger T."/>
            <person name="Pohl T."/>
            <person name="Terryn N."/>
            <person name="Gielen J."/>
            <person name="Villarroel R."/>
            <person name="De Clercq R."/>
            <person name="van Montagu M."/>
            <person name="Lecharny A."/>
            <person name="Aubourg S."/>
            <person name="Gy I."/>
            <person name="Kreis M."/>
            <person name="Lao N."/>
            <person name="Kavanagh T."/>
            <person name="Hempel S."/>
            <person name="Kotter P."/>
            <person name="Entian K.-D."/>
            <person name="Rieger M."/>
            <person name="Schaefer M."/>
            <person name="Funk B."/>
            <person name="Mueller-Auer S."/>
            <person name="Silvey M."/>
            <person name="James R."/>
            <person name="Monfort A."/>
            <person name="Pons A."/>
            <person name="Puigdomenech P."/>
            <person name="Douka A."/>
            <person name="Voukelatou E."/>
            <person name="Milioni D."/>
            <person name="Hatzopoulos P."/>
            <person name="Piravandi E."/>
            <person name="Obermaier B."/>
            <person name="Hilbert H."/>
            <person name="Duesterhoeft A."/>
            <person name="Moores T."/>
            <person name="Jones J.D.G."/>
            <person name="Eneva T."/>
            <person name="Palme K."/>
            <person name="Benes V."/>
            <person name="Rechmann S."/>
            <person name="Ansorge W."/>
            <person name="Cooke R."/>
            <person name="Berger C."/>
            <person name="Delseny M."/>
            <person name="Voet M."/>
            <person name="Volckaert G."/>
            <person name="Mewes H.-W."/>
            <person name="Klosterman S."/>
            <person name="Schueller C."/>
            <person name="Chalwatzis N."/>
        </authorList>
    </citation>
    <scope>NUCLEOTIDE SEQUENCE [LARGE SCALE GENOMIC DNA]</scope>
    <source>
        <strain>cv. Columbia</strain>
    </source>
</reference>
<reference key="2">
    <citation type="journal article" date="1999" name="Nature">
        <title>Sequence and analysis of chromosome 4 of the plant Arabidopsis thaliana.</title>
        <authorList>
            <person name="Mayer K.F.X."/>
            <person name="Schueller C."/>
            <person name="Wambutt R."/>
            <person name="Murphy G."/>
            <person name="Volckaert G."/>
            <person name="Pohl T."/>
            <person name="Duesterhoeft A."/>
            <person name="Stiekema W."/>
            <person name="Entian K.-D."/>
            <person name="Terryn N."/>
            <person name="Harris B."/>
            <person name="Ansorge W."/>
            <person name="Brandt P."/>
            <person name="Grivell L.A."/>
            <person name="Rieger M."/>
            <person name="Weichselgartner M."/>
            <person name="de Simone V."/>
            <person name="Obermaier B."/>
            <person name="Mache R."/>
            <person name="Mueller M."/>
            <person name="Kreis M."/>
            <person name="Delseny M."/>
            <person name="Puigdomenech P."/>
            <person name="Watson M."/>
            <person name="Schmidtheini T."/>
            <person name="Reichert B."/>
            <person name="Portetelle D."/>
            <person name="Perez-Alonso M."/>
            <person name="Boutry M."/>
            <person name="Bancroft I."/>
            <person name="Vos P."/>
            <person name="Hoheisel J."/>
            <person name="Zimmermann W."/>
            <person name="Wedler H."/>
            <person name="Ridley P."/>
            <person name="Langham S.-A."/>
            <person name="McCullagh B."/>
            <person name="Bilham L."/>
            <person name="Robben J."/>
            <person name="van der Schueren J."/>
            <person name="Grymonprez B."/>
            <person name="Chuang Y.-J."/>
            <person name="Vandenbussche F."/>
            <person name="Braeken M."/>
            <person name="Weltjens I."/>
            <person name="Voet M."/>
            <person name="Bastiaens I."/>
            <person name="Aert R."/>
            <person name="Defoor E."/>
            <person name="Weitzenegger T."/>
            <person name="Bothe G."/>
            <person name="Ramsperger U."/>
            <person name="Hilbert H."/>
            <person name="Braun M."/>
            <person name="Holzer E."/>
            <person name="Brandt A."/>
            <person name="Peters S."/>
            <person name="van Staveren M."/>
            <person name="Dirkse W."/>
            <person name="Mooijman P."/>
            <person name="Klein Lankhorst R."/>
            <person name="Rose M."/>
            <person name="Hauf J."/>
            <person name="Koetter P."/>
            <person name="Berneiser S."/>
            <person name="Hempel S."/>
            <person name="Feldpausch M."/>
            <person name="Lamberth S."/>
            <person name="Van den Daele H."/>
            <person name="De Keyser A."/>
            <person name="Buysshaert C."/>
            <person name="Gielen J."/>
            <person name="Villarroel R."/>
            <person name="De Clercq R."/>
            <person name="van Montagu M."/>
            <person name="Rogers J."/>
            <person name="Cronin A."/>
            <person name="Quail M.A."/>
            <person name="Bray-Allen S."/>
            <person name="Clark L."/>
            <person name="Doggett J."/>
            <person name="Hall S."/>
            <person name="Kay M."/>
            <person name="Lennard N."/>
            <person name="McLay K."/>
            <person name="Mayes R."/>
            <person name="Pettett A."/>
            <person name="Rajandream M.A."/>
            <person name="Lyne M."/>
            <person name="Benes V."/>
            <person name="Rechmann S."/>
            <person name="Borkova D."/>
            <person name="Bloecker H."/>
            <person name="Scharfe M."/>
            <person name="Grimm M."/>
            <person name="Loehnert T.-H."/>
            <person name="Dose S."/>
            <person name="de Haan M."/>
            <person name="Maarse A.C."/>
            <person name="Schaefer M."/>
            <person name="Mueller-Auer S."/>
            <person name="Gabel C."/>
            <person name="Fuchs M."/>
            <person name="Fartmann B."/>
            <person name="Granderath K."/>
            <person name="Dauner D."/>
            <person name="Herzl A."/>
            <person name="Neumann S."/>
            <person name="Argiriou A."/>
            <person name="Vitale D."/>
            <person name="Liguori R."/>
            <person name="Piravandi E."/>
            <person name="Massenet O."/>
            <person name="Quigley F."/>
            <person name="Clabauld G."/>
            <person name="Muendlein A."/>
            <person name="Felber R."/>
            <person name="Schnabl S."/>
            <person name="Hiller R."/>
            <person name="Schmidt W."/>
            <person name="Lecharny A."/>
            <person name="Aubourg S."/>
            <person name="Chefdor F."/>
            <person name="Cooke R."/>
            <person name="Berger C."/>
            <person name="Monfort A."/>
            <person name="Casacuberta E."/>
            <person name="Gibbons T."/>
            <person name="Weber N."/>
            <person name="Vandenbol M."/>
            <person name="Bargues M."/>
            <person name="Terol J."/>
            <person name="Torres A."/>
            <person name="Perez-Perez A."/>
            <person name="Purnelle B."/>
            <person name="Bent E."/>
            <person name="Johnson S."/>
            <person name="Tacon D."/>
            <person name="Jesse T."/>
            <person name="Heijnen L."/>
            <person name="Schwarz S."/>
            <person name="Scholler P."/>
            <person name="Heber S."/>
            <person name="Francs P."/>
            <person name="Bielke C."/>
            <person name="Frishman D."/>
            <person name="Haase D."/>
            <person name="Lemcke K."/>
            <person name="Mewes H.-W."/>
            <person name="Stocker S."/>
            <person name="Zaccaria P."/>
            <person name="Bevan M."/>
            <person name="Wilson R.K."/>
            <person name="de la Bastide M."/>
            <person name="Habermann K."/>
            <person name="Parnell L."/>
            <person name="Dedhia N."/>
            <person name="Gnoj L."/>
            <person name="Schutz K."/>
            <person name="Huang E."/>
            <person name="Spiegel L."/>
            <person name="Sekhon M."/>
            <person name="Murray J."/>
            <person name="Sheet P."/>
            <person name="Cordes M."/>
            <person name="Abu-Threideh J."/>
            <person name="Stoneking T."/>
            <person name="Kalicki J."/>
            <person name="Graves T."/>
            <person name="Harmon G."/>
            <person name="Edwards J."/>
            <person name="Latreille P."/>
            <person name="Courtney L."/>
            <person name="Cloud J."/>
            <person name="Abbott A."/>
            <person name="Scott K."/>
            <person name="Johnson D."/>
            <person name="Minx P."/>
            <person name="Bentley D."/>
            <person name="Fulton B."/>
            <person name="Miller N."/>
            <person name="Greco T."/>
            <person name="Kemp K."/>
            <person name="Kramer J."/>
            <person name="Fulton L."/>
            <person name="Mardis E."/>
            <person name="Dante M."/>
            <person name="Pepin K."/>
            <person name="Hillier L.W."/>
            <person name="Nelson J."/>
            <person name="Spieth J."/>
            <person name="Ryan E."/>
            <person name="Andrews S."/>
            <person name="Geisel C."/>
            <person name="Layman D."/>
            <person name="Du H."/>
            <person name="Ali J."/>
            <person name="Berghoff A."/>
            <person name="Jones K."/>
            <person name="Drone K."/>
            <person name="Cotton M."/>
            <person name="Joshu C."/>
            <person name="Antonoiu B."/>
            <person name="Zidanic M."/>
            <person name="Strong C."/>
            <person name="Sun H."/>
            <person name="Lamar B."/>
            <person name="Yordan C."/>
            <person name="Ma P."/>
            <person name="Zhong J."/>
            <person name="Preston R."/>
            <person name="Vil D."/>
            <person name="Shekher M."/>
            <person name="Matero A."/>
            <person name="Shah R."/>
            <person name="Swaby I.K."/>
            <person name="O'Shaughnessy A."/>
            <person name="Rodriguez M."/>
            <person name="Hoffman J."/>
            <person name="Till S."/>
            <person name="Granat S."/>
            <person name="Shohdy N."/>
            <person name="Hasegawa A."/>
            <person name="Hameed A."/>
            <person name="Lodhi M."/>
            <person name="Johnson A."/>
            <person name="Chen E."/>
            <person name="Marra M.A."/>
            <person name="Martienssen R."/>
            <person name="McCombie W.R."/>
        </authorList>
    </citation>
    <scope>NUCLEOTIDE SEQUENCE [LARGE SCALE GENOMIC DNA]</scope>
    <source>
        <strain>cv. Columbia</strain>
    </source>
</reference>
<reference key="3">
    <citation type="journal article" date="2017" name="Plant J.">
        <title>Araport11: a complete reannotation of the Arabidopsis thaliana reference genome.</title>
        <authorList>
            <person name="Cheng C.Y."/>
            <person name="Krishnakumar V."/>
            <person name="Chan A.P."/>
            <person name="Thibaud-Nissen F."/>
            <person name="Schobel S."/>
            <person name="Town C.D."/>
        </authorList>
    </citation>
    <scope>GENOME REANNOTATION</scope>
    <source>
        <strain>cv. Columbia</strain>
    </source>
</reference>
<reference key="4">
    <citation type="journal article" date="2002" name="Science">
        <title>Functional annotation of a full-length Arabidopsis cDNA collection.</title>
        <authorList>
            <person name="Seki M."/>
            <person name="Narusaka M."/>
            <person name="Kamiya A."/>
            <person name="Ishida J."/>
            <person name="Satou M."/>
            <person name="Sakurai T."/>
            <person name="Nakajima M."/>
            <person name="Enju A."/>
            <person name="Akiyama K."/>
            <person name="Oono Y."/>
            <person name="Muramatsu M."/>
            <person name="Hayashizaki Y."/>
            <person name="Kawai J."/>
            <person name="Carninci P."/>
            <person name="Itoh M."/>
            <person name="Ishii Y."/>
            <person name="Arakawa T."/>
            <person name="Shibata K."/>
            <person name="Shinagawa A."/>
            <person name="Shinozaki K."/>
        </authorList>
    </citation>
    <scope>NUCLEOTIDE SEQUENCE [LARGE SCALE MRNA]</scope>
    <source>
        <strain>cv. Columbia</strain>
    </source>
</reference>
<reference key="5">
    <citation type="journal article" date="2003" name="Science">
        <title>Empirical analysis of transcriptional activity in the Arabidopsis genome.</title>
        <authorList>
            <person name="Yamada K."/>
            <person name="Lim J."/>
            <person name="Dale J.M."/>
            <person name="Chen H."/>
            <person name="Shinn P."/>
            <person name="Palm C.J."/>
            <person name="Southwick A.M."/>
            <person name="Wu H.C."/>
            <person name="Kim C.J."/>
            <person name="Nguyen M."/>
            <person name="Pham P.K."/>
            <person name="Cheuk R.F."/>
            <person name="Karlin-Newmann G."/>
            <person name="Liu S.X."/>
            <person name="Lam B."/>
            <person name="Sakano H."/>
            <person name="Wu T."/>
            <person name="Yu G."/>
            <person name="Miranda M."/>
            <person name="Quach H.L."/>
            <person name="Tripp M."/>
            <person name="Chang C.H."/>
            <person name="Lee J.M."/>
            <person name="Toriumi M.J."/>
            <person name="Chan M.M."/>
            <person name="Tang C.C."/>
            <person name="Onodera C.S."/>
            <person name="Deng J.M."/>
            <person name="Akiyama K."/>
            <person name="Ansari Y."/>
            <person name="Arakawa T."/>
            <person name="Banh J."/>
            <person name="Banno F."/>
            <person name="Bowser L."/>
            <person name="Brooks S.Y."/>
            <person name="Carninci P."/>
            <person name="Chao Q."/>
            <person name="Choy N."/>
            <person name="Enju A."/>
            <person name="Goldsmith A.D."/>
            <person name="Gurjal M."/>
            <person name="Hansen N.F."/>
            <person name="Hayashizaki Y."/>
            <person name="Johnson-Hopson C."/>
            <person name="Hsuan V.W."/>
            <person name="Iida K."/>
            <person name="Karnes M."/>
            <person name="Khan S."/>
            <person name="Koesema E."/>
            <person name="Ishida J."/>
            <person name="Jiang P.X."/>
            <person name="Jones T."/>
            <person name="Kawai J."/>
            <person name="Kamiya A."/>
            <person name="Meyers C."/>
            <person name="Nakajima M."/>
            <person name="Narusaka M."/>
            <person name="Seki M."/>
            <person name="Sakurai T."/>
            <person name="Satou M."/>
            <person name="Tamse R."/>
            <person name="Vaysberg M."/>
            <person name="Wallender E.K."/>
            <person name="Wong C."/>
            <person name="Yamamura Y."/>
            <person name="Yuan S."/>
            <person name="Shinozaki K."/>
            <person name="Davis R.W."/>
            <person name="Theologis A."/>
            <person name="Ecker J.R."/>
        </authorList>
    </citation>
    <scope>NUCLEOTIDE SEQUENCE [LARGE SCALE MRNA]</scope>
    <source>
        <strain>cv. Columbia</strain>
    </source>
</reference>
<reference key="6">
    <citation type="submission" date="2002-03" db="EMBL/GenBank/DDBJ databases">
        <title>Full-length cDNA from Arabidopsis thaliana.</title>
        <authorList>
            <person name="Brover V.V."/>
            <person name="Troukhan M.E."/>
            <person name="Alexandrov N.A."/>
            <person name="Lu Y.-P."/>
            <person name="Flavell R.B."/>
            <person name="Feldmann K.A."/>
        </authorList>
    </citation>
    <scope>NUCLEOTIDE SEQUENCE [LARGE SCALE MRNA]</scope>
</reference>
<comment type="function">
    <text evidence="1">Required for vesicular transport from the ER to the Golgi complex. Functions as a SNARE associated with ER-derived vesicles (By similarity).</text>
</comment>
<comment type="subcellular location">
    <subcellularLocation>
        <location evidence="1">Golgi apparatus membrane</location>
        <topology evidence="1">Single-pass type IV membrane protein</topology>
    </subcellularLocation>
    <subcellularLocation>
        <location evidence="1">Endoplasmic reticulum membrane</location>
        <topology evidence="1">Single-pass type IV membrane protein</topology>
    </subcellularLocation>
</comment>
<comment type="similarity">
    <text evidence="4">Belongs to the BET1 family.</text>
</comment>
<comment type="sequence caution" evidence="4">
    <conflict type="erroneous gene model prediction">
        <sequence resource="EMBL-CDS" id="CAB10239"/>
    </conflict>
</comment>
<comment type="sequence caution" evidence="4">
    <conflict type="erroneous gene model prediction">
        <sequence resource="EMBL-CDS" id="CAB78502"/>
    </conflict>
</comment>
<name>BETL1_ARATH</name>
<evidence type="ECO:0000250" key="1"/>
<evidence type="ECO:0000255" key="2"/>
<evidence type="ECO:0000255" key="3">
    <source>
        <dbReference type="PROSITE-ProRule" id="PRU00202"/>
    </source>
</evidence>
<evidence type="ECO:0000305" key="4"/>
<feature type="chain" id="PRO_0000206889" description="Bet1-like protein At4g14600">
    <location>
        <begin position="1"/>
        <end position="137"/>
    </location>
</feature>
<feature type="topological domain" description="Cytoplasmic" evidence="2">
    <location>
        <begin position="1"/>
        <end position="113"/>
    </location>
</feature>
<feature type="transmembrane region" description="Helical; Anchor for type IV membrane protein" evidence="2">
    <location>
        <begin position="114"/>
        <end position="134"/>
    </location>
</feature>
<feature type="topological domain" description="Vesicular" evidence="2">
    <location>
        <begin position="135"/>
        <end position="137"/>
    </location>
</feature>
<feature type="domain" description="t-SNARE coiled-coil homology" evidence="3">
    <location>
        <begin position="43"/>
        <end position="105"/>
    </location>
</feature>
<keyword id="KW-0175">Coiled coil</keyword>
<keyword id="KW-0256">Endoplasmic reticulum</keyword>
<keyword id="KW-0931">ER-Golgi transport</keyword>
<keyword id="KW-0333">Golgi apparatus</keyword>
<keyword id="KW-0472">Membrane</keyword>
<keyword id="KW-0653">Protein transport</keyword>
<keyword id="KW-1185">Reference proteome</keyword>
<keyword id="KW-0812">Transmembrane</keyword>
<keyword id="KW-1133">Transmembrane helix</keyword>
<keyword id="KW-0813">Transport</keyword>
<dbReference type="EMBL" id="Z97336">
    <property type="protein sequence ID" value="CAB10239.1"/>
    <property type="status" value="ALT_SEQ"/>
    <property type="molecule type" value="Genomic_DNA"/>
</dbReference>
<dbReference type="EMBL" id="AL161539">
    <property type="protein sequence ID" value="CAB78502.1"/>
    <property type="status" value="ALT_SEQ"/>
    <property type="molecule type" value="Genomic_DNA"/>
</dbReference>
<dbReference type="EMBL" id="CP002687">
    <property type="protein sequence ID" value="AEE83464.1"/>
    <property type="molecule type" value="Genomic_DNA"/>
</dbReference>
<dbReference type="EMBL" id="AK118653">
    <property type="protein sequence ID" value="BAC43249.1"/>
    <property type="molecule type" value="mRNA"/>
</dbReference>
<dbReference type="EMBL" id="AY074370">
    <property type="protein sequence ID" value="AAL67066.1"/>
    <property type="molecule type" value="mRNA"/>
</dbReference>
<dbReference type="EMBL" id="AY091400">
    <property type="protein sequence ID" value="AAM14339.1"/>
    <property type="molecule type" value="mRNA"/>
</dbReference>
<dbReference type="EMBL" id="AY085955">
    <property type="protein sequence ID" value="AAM63165.1"/>
    <property type="molecule type" value="mRNA"/>
</dbReference>
<dbReference type="PIR" id="E71408">
    <property type="entry name" value="E71408"/>
</dbReference>
<dbReference type="RefSeq" id="NP_567434.1">
    <property type="nucleotide sequence ID" value="NM_117540.3"/>
</dbReference>
<dbReference type="SMR" id="Q8VXX9"/>
<dbReference type="FunCoup" id="Q8VXX9">
    <property type="interactions" value="417"/>
</dbReference>
<dbReference type="STRING" id="3702.Q8VXX9"/>
<dbReference type="PaxDb" id="3702-AT4G14600.1"/>
<dbReference type="ProteomicsDB" id="241212"/>
<dbReference type="EnsemblPlants" id="AT4G14600.1">
    <property type="protein sequence ID" value="AT4G14600.1"/>
    <property type="gene ID" value="AT4G14600"/>
</dbReference>
<dbReference type="GeneID" id="827108"/>
<dbReference type="Gramene" id="AT4G14600.1">
    <property type="protein sequence ID" value="AT4G14600.1"/>
    <property type="gene ID" value="AT4G14600"/>
</dbReference>
<dbReference type="KEGG" id="ath:AT4G14600"/>
<dbReference type="Araport" id="AT4G14600"/>
<dbReference type="TAIR" id="AT4G14600"/>
<dbReference type="eggNOG" id="KOG1267">
    <property type="taxonomic scope" value="Eukaryota"/>
</dbReference>
<dbReference type="HOGENOM" id="CLU_148320_0_0_1"/>
<dbReference type="InParanoid" id="Q8VXX9"/>
<dbReference type="OMA" id="GLKNNMR"/>
<dbReference type="OrthoDB" id="261831at2759"/>
<dbReference type="PhylomeDB" id="Q8VXX9"/>
<dbReference type="PRO" id="PR:Q8VXX9"/>
<dbReference type="Proteomes" id="UP000006548">
    <property type="component" value="Chromosome 4"/>
</dbReference>
<dbReference type="ExpressionAtlas" id="Q8VXX9">
    <property type="expression patterns" value="baseline and differential"/>
</dbReference>
<dbReference type="GO" id="GO:0005789">
    <property type="term" value="C:endoplasmic reticulum membrane"/>
    <property type="evidence" value="ECO:0007669"/>
    <property type="project" value="UniProtKB-SubCell"/>
</dbReference>
<dbReference type="GO" id="GO:0000139">
    <property type="term" value="C:Golgi membrane"/>
    <property type="evidence" value="ECO:0007669"/>
    <property type="project" value="UniProtKB-SubCell"/>
</dbReference>
<dbReference type="GO" id="GO:0005886">
    <property type="term" value="C:plasma membrane"/>
    <property type="evidence" value="ECO:0007005"/>
    <property type="project" value="TAIR"/>
</dbReference>
<dbReference type="GO" id="GO:0015031">
    <property type="term" value="P:protein transport"/>
    <property type="evidence" value="ECO:0007669"/>
    <property type="project" value="UniProtKB-KW"/>
</dbReference>
<dbReference type="GO" id="GO:0016192">
    <property type="term" value="P:vesicle-mediated transport"/>
    <property type="evidence" value="ECO:0007669"/>
    <property type="project" value="UniProtKB-KW"/>
</dbReference>
<dbReference type="CDD" id="cd15841">
    <property type="entry name" value="SNARE_Qc"/>
    <property type="match status" value="1"/>
</dbReference>
<dbReference type="FunFam" id="1.20.5.110:FF:000056">
    <property type="entry name" value="Bet1-like protein At4g14600"/>
    <property type="match status" value="1"/>
</dbReference>
<dbReference type="Gene3D" id="1.20.5.110">
    <property type="match status" value="1"/>
</dbReference>
<dbReference type="InterPro" id="IPR000727">
    <property type="entry name" value="T_SNARE_dom"/>
</dbReference>
<dbReference type="PANTHER" id="PTHR12791">
    <property type="entry name" value="GOLGI SNARE BET1-RELATED"/>
    <property type="match status" value="1"/>
</dbReference>
<dbReference type="SMART" id="SM00397">
    <property type="entry name" value="t_SNARE"/>
    <property type="match status" value="1"/>
</dbReference>
<dbReference type="SUPFAM" id="SSF58038">
    <property type="entry name" value="SNARE fusion complex"/>
    <property type="match status" value="1"/>
</dbReference>
<dbReference type="PROSITE" id="PS50192">
    <property type="entry name" value="T_SNARE"/>
    <property type="match status" value="1"/>
</dbReference>
<sequence length="137" mass="15384">MASNPHRSGAGGSLYGGAAPYRSREGLSTRNAAGSEEIQLRIDPMHSDLDDEITGLHGQVRQLKNIAQEIGSEAKFQRDFLDELQMTLIRAQAGVKNNIRKLNMSIIRSGNNHIMHVVLFALLVFFVLYIWSKMFKR</sequence>
<gene>
    <name type="ordered locus">At4g14600</name>
    <name type="ORF">dl3340w</name>
    <name type="ORF">FCAALL.126</name>
</gene>
<protein>
    <recommendedName>
        <fullName>Bet1-like protein At4g14600</fullName>
    </recommendedName>
</protein>
<organism>
    <name type="scientific">Arabidopsis thaliana</name>
    <name type="common">Mouse-ear cress</name>
    <dbReference type="NCBI Taxonomy" id="3702"/>
    <lineage>
        <taxon>Eukaryota</taxon>
        <taxon>Viridiplantae</taxon>
        <taxon>Streptophyta</taxon>
        <taxon>Embryophyta</taxon>
        <taxon>Tracheophyta</taxon>
        <taxon>Spermatophyta</taxon>
        <taxon>Magnoliopsida</taxon>
        <taxon>eudicotyledons</taxon>
        <taxon>Gunneridae</taxon>
        <taxon>Pentapetalae</taxon>
        <taxon>rosids</taxon>
        <taxon>malvids</taxon>
        <taxon>Brassicales</taxon>
        <taxon>Brassicaceae</taxon>
        <taxon>Camelineae</taxon>
        <taxon>Arabidopsis</taxon>
    </lineage>
</organism>